<reference key="1">
    <citation type="journal article" date="2015" name="Genome Announc.">
        <title>Draft genome sequence of the fungus Penicillium brasilianum MG11.</title>
        <authorList>
            <person name="Horn F."/>
            <person name="Linde J."/>
            <person name="Mattern D.J."/>
            <person name="Walther G."/>
            <person name="Guthke R."/>
            <person name="Brakhage A.A."/>
            <person name="Valiante V."/>
        </authorList>
    </citation>
    <scope>NUCLEOTIDE SEQUENCE [LARGE SCALE GENOMIC DNA]</scope>
    <source>
        <strain>MG11</strain>
    </source>
</reference>
<reference key="2">
    <citation type="journal article" date="2016" name="J. Am. Chem. Soc.">
        <title>Discovery of key dioxygenases that diverged the paraherquonin and acetoxydehydroaustin pathways in Penicillium brasilianum.</title>
        <authorList>
            <person name="Matsuda Y."/>
            <person name="Iwabuchi T."/>
            <person name="Fujimoto T."/>
            <person name="Awakawa T."/>
            <person name="Nakashima Y."/>
            <person name="Mori T."/>
            <person name="Zhang H."/>
            <person name="Hayashi F."/>
            <person name="Abe I."/>
        </authorList>
    </citation>
    <scope>FUNCTION</scope>
</reference>
<reference key="3">
    <citation type="journal article" date="2017" name="ACS Chem. Biol.">
        <title>Rewiring of the austinoid biosynthetic pathway in filamentous fungi.</title>
        <authorList>
            <person name="Mattern D.J."/>
            <person name="Valiante V."/>
            <person name="Horn F."/>
            <person name="Petzke L."/>
            <person name="Brakhage A.A."/>
        </authorList>
    </citation>
    <scope>FUNCTION</scope>
</reference>
<comment type="function">
    <text evidence="1 3">O-acyltransferase; part of the gene cluster B that mediates the biosynthesis of the fungal meroterpenoid acetoxydehydroaustin (PubMed:29076725). The first step of the pathway is the synthesis of 3,5-dimethylorsellinic acid by the polyketide synthase ausA (By similarity). 3,5-dimethylorsellinic acid is then prenylated by the polyprenyl transferase ausN (By similarity). Further epoxidation by the FAD-dependent monooxygenase ausM and cyclization by the probable terpene cyclase ausL lead to the formation of protoaustinoid A (By similarity). Protoaustinoid A is then oxidized to spiro-lactone preaustinoid A3 by the combined action of the FAD-binding monooxygenases ausB and ausC, and the dioxygenase ausE (By similarity). Acid-catalyzed keto-rearrangement and ring contraction of the tetraketide portion of preaustinoid A3 by ausJ lead to the formation of preaustinoid A4 (By similarity). The aldo-keto reductase ausK, with the help of ausH, is involved in the next step by transforming preaustinoid A4 into isoaustinone which is in turn hydroxylated by the P450 monooxygenase ausI to form austinolide (By similarity). The cytochrome P450 monooxygenase ausG then modifies austinolide to austinol (By similarity). Austinol is further acetylated to austin by the O-acetyltransferase ausP, which spontaneously changes to dehydroaustin (PubMed:29076725). The cytochrome P450 monooxygenase then converts dehydroaustin is into 7-dehydrodehydroaustin (PubMed:29076725). The hydroxylation catalyzed by ausR permits the second O-acetyltransferase ausQ to add an additional acetyl group to the molecule, leading to the formation of acetoxydehydroaustin (PubMed:29076725). Due to genetic rearrangements of the clusters and the subsequent loss of some enzymes, the end product of the Penicillium brasilianum austinoid biosynthesis clusters is acetoxydehydroaustin (PubMed:29076725).</text>
</comment>
<comment type="pathway">
    <text evidence="6">Secondary metabolite biosynthesis; terpenoid biosynthesis.</text>
</comment>
<comment type="subunit">
    <text evidence="2">Monomer.</text>
</comment>
<comment type="miscellaneous">
    <text evidence="6">In A.calidoustus, the austinoid gene cluster lies on a contiguous DNA region, while clusters from E.nidulans and P.brasilianum are split in their respective genomes. Genetic rearrangements provoked variability among the clusters and E.nidulans produces the least number of austionoid derivatives with the end products austinol and dehydroaustinol, while P.brasilianum can produce until acetoxydehydroaustin, and A.calidoustus produces the highest number of identified derivatives.</text>
</comment>
<comment type="similarity">
    <text evidence="5">Belongs to the plant acyltransferase family.</text>
</comment>
<keyword id="KW-0012">Acyltransferase</keyword>
<keyword id="KW-1185">Reference proteome</keyword>
<keyword id="KW-0808">Transferase</keyword>
<evidence type="ECO:0000250" key="1">
    <source>
        <dbReference type="UniProtKB" id="A0A0U5GIM7"/>
    </source>
</evidence>
<evidence type="ECO:0000250" key="2">
    <source>
        <dbReference type="UniProtKB" id="Q70PR7"/>
    </source>
</evidence>
<evidence type="ECO:0000269" key="3">
    <source>
    </source>
</evidence>
<evidence type="ECO:0000303" key="4">
    <source>
    </source>
</evidence>
<evidence type="ECO:0000305" key="5"/>
<evidence type="ECO:0000305" key="6">
    <source>
    </source>
</evidence>
<sequence length="482" mass="54847">MEVVRYFTRNQKQLPATGPNDSIVQLPDIPPCYECNVEVALRFDSSLDSEKLQQSLKQLLEIGNWRQLGGRVRRRDTNPSACNYDLHVPAEFTTERPAFNYQIWELSGAIDEHPTASKMPRPTDPKKVSFYNVGDARSPLRTRTRYPRKAQEWADSDLPPLSFEQLSFRDGTIILLVFPHILMDATGYGLFLKAWTSVLQGRIDHVPQCCGFSESTTDMLGHKTPAGAFTWHNHLLKGLDSLKFTAGLLWENRWGKEDRVIRVPAKFIMHTRDKVLADLSTSQPSPFVSQSDVLIAWFTRVVLAALKPLQRRTLVLTNAFDTRHMLPPERAYLQNSVCMAHTMLPVGEVLYNPVSFLANEIRRSLVRERTEEQIQARCAWAKDVGIMPLLGTSDMLLCNVSNWSKGNLVDLDLCHAAVTEHRGPCVPSSILNCSQMGGVTPNYGIILGKDSQDCWWMQWHLPKFCWAGIERELDTINQIRWE</sequence>
<accession>A0A0F7TQP2</accession>
<organism>
    <name type="scientific">Penicillium brasilianum</name>
    <dbReference type="NCBI Taxonomy" id="104259"/>
    <lineage>
        <taxon>Eukaryota</taxon>
        <taxon>Fungi</taxon>
        <taxon>Dikarya</taxon>
        <taxon>Ascomycota</taxon>
        <taxon>Pezizomycotina</taxon>
        <taxon>Eurotiomycetes</taxon>
        <taxon>Eurotiomycetidae</taxon>
        <taxon>Eurotiales</taxon>
        <taxon>Aspergillaceae</taxon>
        <taxon>Penicillium</taxon>
    </lineage>
</organism>
<name>AUSP_PENBI</name>
<proteinExistence type="inferred from homology"/>
<dbReference type="EC" id="2.3.1.-" evidence="6"/>
<dbReference type="EMBL" id="CDHK01000006">
    <property type="protein sequence ID" value="CEJ58141.1"/>
    <property type="molecule type" value="Genomic_DNA"/>
</dbReference>
<dbReference type="SMR" id="A0A0F7TQP2"/>
<dbReference type="STRING" id="104259.A0A0F7TQP2"/>
<dbReference type="OrthoDB" id="21502at2759"/>
<dbReference type="UniPathway" id="UPA00213"/>
<dbReference type="Proteomes" id="UP000042958">
    <property type="component" value="Unassembled WGS sequence"/>
</dbReference>
<dbReference type="GO" id="GO:0016746">
    <property type="term" value="F:acyltransferase activity"/>
    <property type="evidence" value="ECO:0007669"/>
    <property type="project" value="UniProtKB-KW"/>
</dbReference>
<dbReference type="GO" id="GO:0016114">
    <property type="term" value="P:terpenoid biosynthetic process"/>
    <property type="evidence" value="ECO:0007669"/>
    <property type="project" value="UniProtKB-UniPathway"/>
</dbReference>
<dbReference type="Gene3D" id="3.30.559.10">
    <property type="entry name" value="Chloramphenicol acetyltransferase-like domain"/>
    <property type="match status" value="2"/>
</dbReference>
<dbReference type="InterPro" id="IPR023213">
    <property type="entry name" value="CAT-like_dom_sf"/>
</dbReference>
<dbReference type="InterPro" id="IPR051283">
    <property type="entry name" value="Sec_Metabolite_Acyltrans"/>
</dbReference>
<dbReference type="PANTHER" id="PTHR31896">
    <property type="entry name" value="FAMILY REGULATORY PROTEIN, PUTATIVE (AFU_ORTHOLOGUE AFUA_3G14730)-RELATED"/>
    <property type="match status" value="1"/>
</dbReference>
<dbReference type="PANTHER" id="PTHR31896:SF69">
    <property type="entry name" value="FAMILY REGULATORY PROTEIN, PUTATIVE (AFU_ORTHOLOGUE AFUA_3G14730)-RELATED"/>
    <property type="match status" value="1"/>
</dbReference>
<dbReference type="Pfam" id="PF02458">
    <property type="entry name" value="Transferase"/>
    <property type="match status" value="1"/>
</dbReference>
<protein>
    <recommendedName>
        <fullName evidence="4">O-acyltransferase ausP</fullName>
        <ecNumber evidence="6">2.3.1.-</ecNumber>
    </recommendedName>
    <alternativeName>
        <fullName evidence="4">Austinoid biosynthesis clusters protein P</fullName>
    </alternativeName>
</protein>
<feature type="chain" id="PRO_0000453866" description="O-acyltransferase ausP">
    <location>
        <begin position="1"/>
        <end position="482"/>
    </location>
</feature>
<feature type="active site" description="Proton acceptor" evidence="2">
    <location>
        <position position="180"/>
    </location>
</feature>
<feature type="active site" description="Proton acceptor" evidence="2">
    <location>
        <position position="412"/>
    </location>
</feature>
<gene>
    <name evidence="4" type="primary">ausP</name>
    <name type="ORF">PMG11_06811</name>
</gene>